<protein>
    <recommendedName>
        <fullName evidence="1">Chaperonin GroEL</fullName>
        <ecNumber evidence="1">5.6.1.7</ecNumber>
    </recommendedName>
    <alternativeName>
        <fullName evidence="1">60 kDa chaperonin</fullName>
    </alternativeName>
    <alternativeName>
        <fullName evidence="1">Chaperonin-60</fullName>
        <shortName evidence="1">Cpn60</shortName>
    </alternativeName>
</protein>
<proteinExistence type="inferred from homology"/>
<keyword id="KW-0067">ATP-binding</keyword>
<keyword id="KW-0143">Chaperone</keyword>
<keyword id="KW-0963">Cytoplasm</keyword>
<keyword id="KW-0413">Isomerase</keyword>
<keyword id="KW-0547">Nucleotide-binding</keyword>
<reference key="1">
    <citation type="journal article" date="2009" name="BMC Genomics">
        <title>Analysis of the Rickettsia africae genome reveals that virulence acquisition in Rickettsia species may be explained by genome reduction.</title>
        <authorList>
            <person name="Fournier P.-E."/>
            <person name="El Karkouri K."/>
            <person name="Leroy Q."/>
            <person name="Robert C."/>
            <person name="Giumelli B."/>
            <person name="Renesto P."/>
            <person name="Socolovschi C."/>
            <person name="Parola P."/>
            <person name="Audic S."/>
            <person name="Raoult D."/>
        </authorList>
    </citation>
    <scope>NUCLEOTIDE SEQUENCE [LARGE SCALE GENOMIC DNA]</scope>
    <source>
        <strain>ESF-5</strain>
    </source>
</reference>
<comment type="function">
    <text evidence="1">Together with its co-chaperonin GroES, plays an essential role in assisting protein folding. The GroEL-GroES system forms a nano-cage that allows encapsulation of the non-native substrate proteins and provides a physical environment optimized to promote and accelerate protein folding.</text>
</comment>
<comment type="catalytic activity">
    <reaction evidence="1">
        <text>ATP + H2O + a folded polypeptide = ADP + phosphate + an unfolded polypeptide.</text>
        <dbReference type="EC" id="5.6.1.7"/>
    </reaction>
</comment>
<comment type="subunit">
    <text evidence="1">Forms a cylinder of 14 subunits composed of two heptameric rings stacked back-to-back. Interacts with the co-chaperonin GroES.</text>
</comment>
<comment type="subcellular location">
    <subcellularLocation>
        <location evidence="1">Cytoplasm</location>
    </subcellularLocation>
</comment>
<comment type="similarity">
    <text evidence="1">Belongs to the chaperonin (HSP60) family.</text>
</comment>
<accession>C3PP72</accession>
<sequence>MATKLIKHGSKAREQMLEGIDILADAVKVTLGPKGRNVLIEQSFGSPKITKDGVTVAKSIELKDKIRNAGAQLLKSAATKAAEVAGDGTTTATVLARALAREGNKLVAAGYNPMDLKRGMDLAVNAVVEEIKKSSKKINSQEEIAQVGTISSNGDKEIGEKIAKAMEEVGKEGVITVEEAKNFSFDVEVVKGMMFDRGYLSPYFVTNSEKMVAELENPFILLFEKKLSNLQPMLPILEAVVQSQRPLLIIAEDVEGEALATLVVNRLRGGLKVAAVKAPGFGDRRKAMMEDIAILTKGELITEDLGMKLENVSIKSLGTAKRVTISKENTVIVDGNGDKKNIEDRVLQIKSQIAETTSDYDKEKLQERLAKLSGGVAVLKVGGATEVEVKERKDRVEDALAATRAAVEEGVVAGGGVTLLHASQPLTKLKVENKDQQAGIEIVIEALKDPLKQIVENAGENGGVVVGKLLEHKDKNYGFNAQDMQYVDMIKAGIIDPAKVVRTALQDATSVASLIITTETLIVDEPSDKAEPMPMRGGMGGMGGMDF</sequence>
<name>CH60_RICAE</name>
<gene>
    <name evidence="1" type="primary">groEL</name>
    <name evidence="1" type="synonym">groL</name>
    <name type="ordered locus">RAF_ORF0871</name>
</gene>
<feature type="chain" id="PRO_1000212207" description="Chaperonin GroEL">
    <location>
        <begin position="1"/>
        <end position="547"/>
    </location>
</feature>
<feature type="region of interest" description="Disordered" evidence="2">
    <location>
        <begin position="527"/>
        <end position="547"/>
    </location>
</feature>
<feature type="compositionally biased region" description="Gly residues" evidence="2">
    <location>
        <begin position="537"/>
        <end position="547"/>
    </location>
</feature>
<feature type="binding site" evidence="1">
    <location>
        <begin position="30"/>
        <end position="33"/>
    </location>
    <ligand>
        <name>ATP</name>
        <dbReference type="ChEBI" id="CHEBI:30616"/>
    </ligand>
</feature>
<feature type="binding site" evidence="1">
    <location>
        <position position="51"/>
    </location>
    <ligand>
        <name>ATP</name>
        <dbReference type="ChEBI" id="CHEBI:30616"/>
    </ligand>
</feature>
<feature type="binding site" evidence="1">
    <location>
        <begin position="87"/>
        <end position="91"/>
    </location>
    <ligand>
        <name>ATP</name>
        <dbReference type="ChEBI" id="CHEBI:30616"/>
    </ligand>
</feature>
<feature type="binding site" evidence="1">
    <location>
        <position position="415"/>
    </location>
    <ligand>
        <name>ATP</name>
        <dbReference type="ChEBI" id="CHEBI:30616"/>
    </ligand>
</feature>
<feature type="binding site" evidence="1">
    <location>
        <position position="496"/>
    </location>
    <ligand>
        <name>ATP</name>
        <dbReference type="ChEBI" id="CHEBI:30616"/>
    </ligand>
</feature>
<organism>
    <name type="scientific">Rickettsia africae (strain ESF-5)</name>
    <dbReference type="NCBI Taxonomy" id="347255"/>
    <lineage>
        <taxon>Bacteria</taxon>
        <taxon>Pseudomonadati</taxon>
        <taxon>Pseudomonadota</taxon>
        <taxon>Alphaproteobacteria</taxon>
        <taxon>Rickettsiales</taxon>
        <taxon>Rickettsiaceae</taxon>
        <taxon>Rickettsieae</taxon>
        <taxon>Rickettsia</taxon>
        <taxon>spotted fever group</taxon>
    </lineage>
</organism>
<dbReference type="EC" id="5.6.1.7" evidence="1"/>
<dbReference type="EMBL" id="CP001612">
    <property type="protein sequence ID" value="ACP53732.1"/>
    <property type="molecule type" value="Genomic_DNA"/>
</dbReference>
<dbReference type="RefSeq" id="WP_012719906.1">
    <property type="nucleotide sequence ID" value="NC_012633.1"/>
</dbReference>
<dbReference type="SMR" id="C3PP72"/>
<dbReference type="KEGG" id="raf:RAF_ORF0871"/>
<dbReference type="HOGENOM" id="CLU_016503_3_0_5"/>
<dbReference type="Proteomes" id="UP000002305">
    <property type="component" value="Chromosome"/>
</dbReference>
<dbReference type="GO" id="GO:0005737">
    <property type="term" value="C:cytoplasm"/>
    <property type="evidence" value="ECO:0007669"/>
    <property type="project" value="UniProtKB-SubCell"/>
</dbReference>
<dbReference type="GO" id="GO:0005524">
    <property type="term" value="F:ATP binding"/>
    <property type="evidence" value="ECO:0007669"/>
    <property type="project" value="UniProtKB-UniRule"/>
</dbReference>
<dbReference type="GO" id="GO:0140662">
    <property type="term" value="F:ATP-dependent protein folding chaperone"/>
    <property type="evidence" value="ECO:0007669"/>
    <property type="project" value="InterPro"/>
</dbReference>
<dbReference type="GO" id="GO:0016853">
    <property type="term" value="F:isomerase activity"/>
    <property type="evidence" value="ECO:0007669"/>
    <property type="project" value="UniProtKB-KW"/>
</dbReference>
<dbReference type="GO" id="GO:0051082">
    <property type="term" value="F:unfolded protein binding"/>
    <property type="evidence" value="ECO:0007669"/>
    <property type="project" value="UniProtKB-UniRule"/>
</dbReference>
<dbReference type="GO" id="GO:0042026">
    <property type="term" value="P:protein refolding"/>
    <property type="evidence" value="ECO:0007669"/>
    <property type="project" value="UniProtKB-UniRule"/>
</dbReference>
<dbReference type="CDD" id="cd03344">
    <property type="entry name" value="GroEL"/>
    <property type="match status" value="1"/>
</dbReference>
<dbReference type="FunFam" id="3.50.7.10:FF:000001">
    <property type="entry name" value="60 kDa chaperonin"/>
    <property type="match status" value="1"/>
</dbReference>
<dbReference type="Gene3D" id="3.50.7.10">
    <property type="entry name" value="GroEL"/>
    <property type="match status" value="1"/>
</dbReference>
<dbReference type="Gene3D" id="1.10.560.10">
    <property type="entry name" value="GroEL-like equatorial domain"/>
    <property type="match status" value="1"/>
</dbReference>
<dbReference type="Gene3D" id="3.30.260.10">
    <property type="entry name" value="TCP-1-like chaperonin intermediate domain"/>
    <property type="match status" value="1"/>
</dbReference>
<dbReference type="HAMAP" id="MF_00600">
    <property type="entry name" value="CH60"/>
    <property type="match status" value="1"/>
</dbReference>
<dbReference type="InterPro" id="IPR018370">
    <property type="entry name" value="Chaperonin_Cpn60_CS"/>
</dbReference>
<dbReference type="InterPro" id="IPR001844">
    <property type="entry name" value="Cpn60/GroEL"/>
</dbReference>
<dbReference type="InterPro" id="IPR002423">
    <property type="entry name" value="Cpn60/GroEL/TCP-1"/>
</dbReference>
<dbReference type="InterPro" id="IPR027409">
    <property type="entry name" value="GroEL-like_apical_dom_sf"/>
</dbReference>
<dbReference type="InterPro" id="IPR027413">
    <property type="entry name" value="GROEL-like_equatorial_sf"/>
</dbReference>
<dbReference type="InterPro" id="IPR027410">
    <property type="entry name" value="TCP-1-like_intermed_sf"/>
</dbReference>
<dbReference type="NCBIfam" id="TIGR02348">
    <property type="entry name" value="GroEL"/>
    <property type="match status" value="1"/>
</dbReference>
<dbReference type="NCBIfam" id="NF000592">
    <property type="entry name" value="PRK00013.1"/>
    <property type="match status" value="1"/>
</dbReference>
<dbReference type="NCBIfam" id="NF009487">
    <property type="entry name" value="PRK12849.1"/>
    <property type="match status" value="1"/>
</dbReference>
<dbReference type="NCBIfam" id="NF009488">
    <property type="entry name" value="PRK12850.1"/>
    <property type="match status" value="1"/>
</dbReference>
<dbReference type="NCBIfam" id="NF009489">
    <property type="entry name" value="PRK12851.1"/>
    <property type="match status" value="1"/>
</dbReference>
<dbReference type="PANTHER" id="PTHR45633">
    <property type="entry name" value="60 KDA HEAT SHOCK PROTEIN, MITOCHONDRIAL"/>
    <property type="match status" value="1"/>
</dbReference>
<dbReference type="Pfam" id="PF00118">
    <property type="entry name" value="Cpn60_TCP1"/>
    <property type="match status" value="1"/>
</dbReference>
<dbReference type="PRINTS" id="PR00298">
    <property type="entry name" value="CHAPERONIN60"/>
</dbReference>
<dbReference type="SUPFAM" id="SSF52029">
    <property type="entry name" value="GroEL apical domain-like"/>
    <property type="match status" value="1"/>
</dbReference>
<dbReference type="SUPFAM" id="SSF48592">
    <property type="entry name" value="GroEL equatorial domain-like"/>
    <property type="match status" value="1"/>
</dbReference>
<dbReference type="SUPFAM" id="SSF54849">
    <property type="entry name" value="GroEL-intermediate domain like"/>
    <property type="match status" value="1"/>
</dbReference>
<dbReference type="PROSITE" id="PS00296">
    <property type="entry name" value="CHAPERONINS_CPN60"/>
    <property type="match status" value="1"/>
</dbReference>
<evidence type="ECO:0000255" key="1">
    <source>
        <dbReference type="HAMAP-Rule" id="MF_00600"/>
    </source>
</evidence>
<evidence type="ECO:0000256" key="2">
    <source>
        <dbReference type="SAM" id="MobiDB-lite"/>
    </source>
</evidence>